<dbReference type="EMBL" id="X14855">
    <property type="protein sequence ID" value="CAA33004.1"/>
    <property type="molecule type" value="Genomic_DNA"/>
</dbReference>
<dbReference type="EMBL" id="X14717">
    <property type="protein sequence ID" value="CAA32841.1"/>
    <property type="molecule type" value="Genomic_DNA"/>
</dbReference>
<dbReference type="PIR" id="S15923">
    <property type="entry name" value="S15923"/>
</dbReference>
<dbReference type="Proteomes" id="UP000009250">
    <property type="component" value="Genome"/>
</dbReference>
<organism>
    <name type="scientific">Thermoproteus tenax virus 1 (strain KRA1)</name>
    <name type="common">TTV1</name>
    <dbReference type="NCBI Taxonomy" id="10480"/>
    <lineage>
        <taxon>Viruses</taxon>
        <taxon>Adnaviria</taxon>
        <taxon>Zilligvirae</taxon>
        <taxon>Taleaviricota</taxon>
        <taxon>Tokiviricetes</taxon>
        <taxon>Primavirales</taxon>
        <taxon>Tristromaviridae</taxon>
        <taxon>Betatristromavirus</taxon>
        <taxon>Betatristromavirus TTV1</taxon>
    </lineage>
</organism>
<protein>
    <recommendedName>
        <fullName>Uncharacterized 12.1 kDa protein</fullName>
    </recommendedName>
</protein>
<sequence>MIAEQIFIIILVLTVLHTAIERIAKRSLSYSNVNYTYTQSISFLVGYTIVYIIMSHISHAVIISIMIMISYAIYIVIKMRNNQQIQNDIEMFMFGMIAGLGIEIVG</sequence>
<organismHost>
    <name type="scientific">Thermoproteus tenax</name>
    <dbReference type="NCBI Taxonomy" id="2271"/>
</organismHost>
<name>YORW_TTV1K</name>
<reference key="1">
    <citation type="journal article" date="1990" name="Nucleic Acids Res.">
        <title>Nucleotide sequence of the viral protein TPX of the TTV1 variant VT3.</title>
        <authorList>
            <person name="Neumann H."/>
            <person name="Zillig W."/>
        </authorList>
    </citation>
    <scope>NUCLEOTIDE SEQUENCE [GENOMIC DNA]</scope>
</reference>
<feature type="chain" id="PRO_0000222989" description="Uncharacterized 12.1 kDa protein">
    <location>
        <begin position="1"/>
        <end position="106"/>
    </location>
</feature>
<keyword id="KW-1185">Reference proteome</keyword>
<proteinExistence type="predicted"/>
<accession>P19307</accession>